<proteinExistence type="evidence at protein level"/>
<name>CARD_ACEWD</name>
<accession>H6LGM7</accession>
<protein>
    <recommendedName>
        <fullName evidence="3">Caffeyl-CoA reductase-Etf complex subunit CarD</fullName>
        <ecNumber evidence="1">1.3.1.108</ecNumber>
    </recommendedName>
    <alternativeName>
        <fullName evidence="3">Electron transfer flavoprotein small subunit</fullName>
        <shortName evidence="3">ETFSS</shortName>
    </alternativeName>
    <alternativeName>
        <fullName evidence="2">Electron transfer flavoprotein subunit beta</fullName>
        <shortName evidence="2">Beta-ETF</shortName>
    </alternativeName>
</protein>
<comment type="function">
    <text evidence="1">Caffeyl-CoA reductase-Etf complex catalyzes the reduction of caffeyl-CoA to yield hydrocaffeyl-CoA. It couples the endergonic ferredoxin reduction with NADH as reductant to the exergonic reduction of caffeoyl-CoA with the same reductant. It uses the mechanism of electron bifurcation to overcome the steep energy barrier in ferredoxin reduction. The electron transfer flavoprotein (Etf) mediates the electron transfer between the different donors and acceptors. The complex can also reduce 4-coumaroyl-CoA and feruloyl-CoA.</text>
</comment>
<comment type="catalytic activity">
    <reaction evidence="1">
        <text>hydrocaffeoyl-CoA + 2 reduced [2Fe-2S]-[ferredoxin] + 2 NAD(+) = (E)-caffeoyl-CoA + 2 oxidized [2Fe-2S]-[ferredoxin] + 2 NADH</text>
        <dbReference type="Rhea" id="RHEA:46956"/>
        <dbReference type="Rhea" id="RHEA-COMP:10000"/>
        <dbReference type="Rhea" id="RHEA-COMP:10001"/>
        <dbReference type="ChEBI" id="CHEBI:33737"/>
        <dbReference type="ChEBI" id="CHEBI:33738"/>
        <dbReference type="ChEBI" id="CHEBI:57540"/>
        <dbReference type="ChEBI" id="CHEBI:57945"/>
        <dbReference type="ChEBI" id="CHEBI:87136"/>
        <dbReference type="ChEBI" id="CHEBI:87137"/>
        <dbReference type="EC" id="1.3.1.108"/>
    </reaction>
</comment>
<comment type="cofactor">
    <cofactor evidence="1">
        <name>FAD</name>
        <dbReference type="ChEBI" id="CHEBI:57692"/>
    </cofactor>
    <text evidence="4">Binds 1 FAD per subunit.</text>
</comment>
<comment type="cofactor">
    <cofactor evidence="1">
        <name>AMP</name>
        <dbReference type="ChEBI" id="CHEBI:456215"/>
    </cofactor>
    <text evidence="4">Binds 1 AMP per subunit.</text>
</comment>
<comment type="subunit">
    <text evidence="1">Part of the homotrimeric caffeyl-CoA reductase-Etf complex composed of (R)-2-hydroxyisocaproyl-CoA dehydratase CarC, and the electron transfer flavoprotein (ETF) alpha (CarE) and beta (CarD) subunits.</text>
</comment>
<comment type="subcellular location">
    <subcellularLocation>
        <location evidence="1">Cytoplasm</location>
    </subcellularLocation>
</comment>
<comment type="similarity">
    <text evidence="3">Belongs to the ETF beta-subunit/FixA family.</text>
</comment>
<dbReference type="EC" id="1.3.1.108" evidence="1"/>
<dbReference type="EMBL" id="CP002987">
    <property type="protein sequence ID" value="AFA48355.1"/>
    <property type="molecule type" value="Genomic_DNA"/>
</dbReference>
<dbReference type="RefSeq" id="WP_014355958.1">
    <property type="nucleotide sequence ID" value="NC_016894.1"/>
</dbReference>
<dbReference type="PDB" id="6FAH">
    <property type="method" value="X-ray"/>
    <property type="resolution" value="3.13 A"/>
    <property type="chains" value="B/F=1-262"/>
</dbReference>
<dbReference type="PDBsum" id="6FAH"/>
<dbReference type="SMR" id="H6LGM7"/>
<dbReference type="STRING" id="931626.Awo_c15730"/>
<dbReference type="KEGG" id="awo:Awo_c15730"/>
<dbReference type="eggNOG" id="COG2086">
    <property type="taxonomic scope" value="Bacteria"/>
</dbReference>
<dbReference type="HOGENOM" id="CLU_060196_2_1_9"/>
<dbReference type="OrthoDB" id="9804960at2"/>
<dbReference type="BioCyc" id="MetaCyc:MONOMER-21377"/>
<dbReference type="BRENDA" id="1.3.1.108">
    <property type="organism ID" value="52"/>
</dbReference>
<dbReference type="Proteomes" id="UP000007177">
    <property type="component" value="Chromosome"/>
</dbReference>
<dbReference type="GO" id="GO:0005737">
    <property type="term" value="C:cytoplasm"/>
    <property type="evidence" value="ECO:0007669"/>
    <property type="project" value="UniProtKB-SubCell"/>
</dbReference>
<dbReference type="GO" id="GO:0009055">
    <property type="term" value="F:electron transfer activity"/>
    <property type="evidence" value="ECO:0007669"/>
    <property type="project" value="InterPro"/>
</dbReference>
<dbReference type="GO" id="GO:0071949">
    <property type="term" value="F:FAD binding"/>
    <property type="evidence" value="ECO:0000314"/>
    <property type="project" value="UniProtKB"/>
</dbReference>
<dbReference type="GO" id="GO:0016628">
    <property type="term" value="F:oxidoreductase activity, acting on the CH-CH group of donors, NAD or NADP as acceptor"/>
    <property type="evidence" value="ECO:0000314"/>
    <property type="project" value="UniProtKB"/>
</dbReference>
<dbReference type="CDD" id="cd01714">
    <property type="entry name" value="ETF_beta"/>
    <property type="match status" value="1"/>
</dbReference>
<dbReference type="FunFam" id="3.40.50.620:FF:000072">
    <property type="entry name" value="Protein FixA homolog"/>
    <property type="match status" value="1"/>
</dbReference>
<dbReference type="Gene3D" id="3.40.50.620">
    <property type="entry name" value="HUPs"/>
    <property type="match status" value="1"/>
</dbReference>
<dbReference type="InterPro" id="IPR000049">
    <property type="entry name" value="ET-Flavoprotein_bsu_CS"/>
</dbReference>
<dbReference type="InterPro" id="IPR014730">
    <property type="entry name" value="ETF_a/b_N"/>
</dbReference>
<dbReference type="InterPro" id="IPR012255">
    <property type="entry name" value="ETF_b"/>
</dbReference>
<dbReference type="InterPro" id="IPR033948">
    <property type="entry name" value="ETF_beta_N"/>
</dbReference>
<dbReference type="InterPro" id="IPR014729">
    <property type="entry name" value="Rossmann-like_a/b/a_fold"/>
</dbReference>
<dbReference type="NCBIfam" id="NF040731">
    <property type="entry name" value="flavo_sub_EftB"/>
    <property type="match status" value="1"/>
</dbReference>
<dbReference type="PANTHER" id="PTHR21294">
    <property type="entry name" value="ELECTRON TRANSFER FLAVOPROTEIN BETA-SUBUNIT"/>
    <property type="match status" value="1"/>
</dbReference>
<dbReference type="PANTHER" id="PTHR21294:SF17">
    <property type="entry name" value="PROTEIN FIXA"/>
    <property type="match status" value="1"/>
</dbReference>
<dbReference type="Pfam" id="PF01012">
    <property type="entry name" value="ETF"/>
    <property type="match status" value="1"/>
</dbReference>
<dbReference type="PIRSF" id="PIRSF000090">
    <property type="entry name" value="Beta-ETF"/>
    <property type="match status" value="1"/>
</dbReference>
<dbReference type="SMART" id="SM00893">
    <property type="entry name" value="ETF"/>
    <property type="match status" value="1"/>
</dbReference>
<dbReference type="SUPFAM" id="SSF52402">
    <property type="entry name" value="Adenine nucleotide alpha hydrolases-like"/>
    <property type="match status" value="1"/>
</dbReference>
<dbReference type="PROSITE" id="PS01065">
    <property type="entry name" value="ETF_BETA"/>
    <property type="match status" value="1"/>
</dbReference>
<organism>
    <name type="scientific">Acetobacterium woodii (strain ATCC 29683 / DSM 1030 / JCM 2381 / KCTC 1655 / WB1)</name>
    <dbReference type="NCBI Taxonomy" id="931626"/>
    <lineage>
        <taxon>Bacteria</taxon>
        <taxon>Bacillati</taxon>
        <taxon>Bacillota</taxon>
        <taxon>Clostridia</taxon>
        <taxon>Eubacteriales</taxon>
        <taxon>Eubacteriaceae</taxon>
        <taxon>Acetobacterium</taxon>
    </lineage>
</organism>
<evidence type="ECO:0000269" key="1">
    <source>
    </source>
</evidence>
<evidence type="ECO:0000303" key="2">
    <source>
    </source>
</evidence>
<evidence type="ECO:0000305" key="3"/>
<evidence type="ECO:0000305" key="4">
    <source>
    </source>
</evidence>
<evidence type="ECO:0007829" key="5">
    <source>
        <dbReference type="PDB" id="6FAH"/>
    </source>
</evidence>
<reference key="1">
    <citation type="submission" date="2011-07" db="EMBL/GenBank/DDBJ databases">
        <title>Complete genome sequence of Acetobacterium woodii.</title>
        <authorList>
            <person name="Poehlein A."/>
            <person name="Schmidt S."/>
            <person name="Kaster A.-K."/>
            <person name="Goenrich M."/>
            <person name="Vollmers J."/>
            <person name="Thuermer A."/>
            <person name="Gottschalk G."/>
            <person name="Thauer R.K."/>
            <person name="Daniel R."/>
            <person name="Mueller V."/>
        </authorList>
    </citation>
    <scope>NUCLEOTIDE SEQUENCE [LARGE SCALE GENOMIC DNA]</scope>
    <source>
        <strain>ATCC 29683 / DSM 1030 / JCM 2381 / KCTC 1655 / WB1</strain>
    </source>
</reference>
<reference key="2">
    <citation type="journal article" date="2013" name="J. Biol. Chem.">
        <title>An electron-bifurcating caffeyl-CoA reductase.</title>
        <authorList>
            <person name="Bertsch J."/>
            <person name="Parthasarathy A."/>
            <person name="Buckel W."/>
            <person name="Mueller V."/>
        </authorList>
    </citation>
    <scope>FUNCTION</scope>
    <scope>CATALYTIC ACTIVITY</scope>
    <scope>SUBCELLULAR LOCATION</scope>
    <scope>COFACTOR</scope>
    <scope>SUBSTRATE SPECIFICITY</scope>
    <scope>SUBUNIT</scope>
    <source>
        <strain>ATCC 29683 / DSM 1030 / JCM 2381 / KCTC 1655 / WB1</strain>
    </source>
</reference>
<gene>
    <name evidence="2" type="primary">carD</name>
    <name type="ordered locus">Awo_c15730</name>
</gene>
<feature type="chain" id="PRO_0000435669" description="Caffeyl-CoA reductase-Etf complex subunit CarD">
    <location>
        <begin position="1"/>
        <end position="262"/>
    </location>
</feature>
<feature type="strand" evidence="5">
    <location>
        <begin position="2"/>
        <end position="6"/>
    </location>
</feature>
<feature type="strand" evidence="5">
    <location>
        <begin position="9"/>
        <end position="11"/>
    </location>
</feature>
<feature type="turn" evidence="5">
    <location>
        <begin position="13"/>
        <end position="17"/>
    </location>
</feature>
<feature type="strand" evidence="5">
    <location>
        <begin position="32"/>
        <end position="34"/>
    </location>
</feature>
<feature type="helix" evidence="5">
    <location>
        <begin position="36"/>
        <end position="51"/>
    </location>
</feature>
<feature type="strand" evidence="5">
    <location>
        <begin position="56"/>
        <end position="63"/>
    </location>
</feature>
<feature type="helix" evidence="5">
    <location>
        <begin position="67"/>
        <end position="77"/>
    </location>
</feature>
<feature type="strand" evidence="5">
    <location>
        <begin position="80"/>
        <end position="85"/>
    </location>
</feature>
<feature type="turn" evidence="5">
    <location>
        <begin position="88"/>
        <end position="90"/>
    </location>
</feature>
<feature type="helix" evidence="5">
    <location>
        <begin position="95"/>
        <end position="107"/>
    </location>
</feature>
<feature type="strand" evidence="5">
    <location>
        <begin position="113"/>
        <end position="119"/>
    </location>
</feature>
<feature type="turn" evidence="5">
    <location>
        <begin position="122"/>
        <end position="124"/>
    </location>
</feature>
<feature type="helix" evidence="5">
    <location>
        <begin position="129"/>
        <end position="136"/>
    </location>
</feature>
<feature type="strand" evidence="5">
    <location>
        <begin position="144"/>
        <end position="151"/>
    </location>
</feature>
<feature type="strand" evidence="5">
    <location>
        <begin position="154"/>
        <end position="161"/>
    </location>
</feature>
<feature type="strand" evidence="5">
    <location>
        <begin position="164"/>
        <end position="178"/>
    </location>
</feature>
<feature type="helix" evidence="5">
    <location>
        <begin position="180"/>
        <end position="182"/>
    </location>
</feature>
<feature type="helix" evidence="5">
    <location>
        <begin position="190"/>
        <end position="198"/>
    </location>
</feature>
<feature type="strand" evidence="5">
    <location>
        <begin position="202"/>
        <end position="204"/>
    </location>
</feature>
<feature type="turn" evidence="5">
    <location>
        <begin position="206"/>
        <end position="210"/>
    </location>
</feature>
<feature type="strand" evidence="5">
    <location>
        <begin position="213"/>
        <end position="216"/>
    </location>
</feature>
<feature type="strand" evidence="5">
    <location>
        <begin position="222"/>
        <end position="229"/>
    </location>
</feature>
<feature type="helix" evidence="5">
    <location>
        <begin position="245"/>
        <end position="257"/>
    </location>
</feature>
<keyword id="KW-0002">3D-structure</keyword>
<keyword id="KW-0963">Cytoplasm</keyword>
<keyword id="KW-0274">FAD</keyword>
<keyword id="KW-0285">Flavoprotein</keyword>
<keyword id="KW-0520">NAD</keyword>
<keyword id="KW-0560">Oxidoreductase</keyword>
<keyword id="KW-1185">Reference proteome</keyword>
<sequence length="262" mass="28237">MRILVCAKQVPDTNEVKIDPKTGTMIREGVPSILNPDDANALEAALVIKDENPGTEVIVMTMGPPQASEMLRECLAMGADEAYLLSDRAFGGADTWATSATLAAGIKKVKKVDLVLAGRQAIDGDTAQVGSQIAQRLKMPVVTYVEDIKIEDKKAIVHRQMEDGYEVIEVQLPCLLTCVKELNDPRYMSVGGIMDAYEQPITIWNHEDIGLSPEACGLNASPTQVFRSFSPPAKGGGEMITGTTVNEVAGSLVSKLKEKHII</sequence>